<comment type="function">
    <text evidence="1">Catalyzes the initial step of the lipid cycle reactions in the biosynthesis of the cell wall peptidoglycan: transfers peptidoglycan precursor phospho-MurNAc-pentapeptide from UDP-MurNAc-pentapeptide onto the lipid carrier undecaprenyl phosphate, yielding undecaprenyl-pyrophosphoryl-MurNAc-pentapeptide, known as lipid I.</text>
</comment>
<comment type="catalytic activity">
    <reaction evidence="1">
        <text>UDP-N-acetyl-alpha-D-muramoyl-L-alanyl-gamma-D-glutamyl-meso-2,6-diaminopimeloyl-D-alanyl-D-alanine + di-trans,octa-cis-undecaprenyl phosphate = di-trans,octa-cis-undecaprenyl diphospho-N-acetyl-alpha-D-muramoyl-L-alanyl-D-glutamyl-meso-2,6-diaminopimeloyl-D-alanyl-D-alanine + UMP</text>
        <dbReference type="Rhea" id="RHEA:28386"/>
        <dbReference type="ChEBI" id="CHEBI:57865"/>
        <dbReference type="ChEBI" id="CHEBI:60392"/>
        <dbReference type="ChEBI" id="CHEBI:61386"/>
        <dbReference type="ChEBI" id="CHEBI:61387"/>
        <dbReference type="EC" id="2.7.8.13"/>
    </reaction>
</comment>
<comment type="cofactor">
    <cofactor evidence="1">
        <name>Mg(2+)</name>
        <dbReference type="ChEBI" id="CHEBI:18420"/>
    </cofactor>
</comment>
<comment type="pathway">
    <text evidence="1">Cell wall biogenesis; peptidoglycan biosynthesis.</text>
</comment>
<comment type="subcellular location">
    <subcellularLocation>
        <location evidence="1">Cell membrane</location>
        <topology evidence="1">Multi-pass membrane protein</topology>
    </subcellularLocation>
</comment>
<comment type="similarity">
    <text evidence="1">Belongs to the glycosyltransferase 4 family. MraY subfamily.</text>
</comment>
<gene>
    <name evidence="1" type="primary">mraY</name>
    <name type="ordered locus">ABC2358</name>
</gene>
<sequence>MEEWTLLFVLILSFAAAVIMSPLFIPFLRKLKFGQSIREEGPKSHQKKSGTPTMGGIVIVLSIFISALAIGIAITGFTPELLLLMVVTLGYGIVGFVDDYLKVVRKHNLGLTSKQKLAGQLVIAAIFYIGLLAIGFDTFIAIPGTTFGFDLGWLYLILIVLMLLGASNAVNLTDGLDGLLAGTGSIAFGAFAILAWSGGFIDTALFSTAITGALLGFLVFNAHPAKVFMGDTGSLALGGAIAAIAILTKMELMLIIVGGVFVIETLSVIIQVASFKLTGKRVFRMSPLHHHYELVGWSEWRVVVTFWLVGMIFAIMGVYIGVWLT</sequence>
<feature type="chain" id="PRO_0000108782" description="Phospho-N-acetylmuramoyl-pentapeptide-transferase">
    <location>
        <begin position="1"/>
        <end position="325"/>
    </location>
</feature>
<feature type="transmembrane region" description="Helical" evidence="1">
    <location>
        <begin position="7"/>
        <end position="27"/>
    </location>
</feature>
<feature type="transmembrane region" description="Helical" evidence="1">
    <location>
        <begin position="57"/>
        <end position="77"/>
    </location>
</feature>
<feature type="transmembrane region" description="Helical" evidence="1">
    <location>
        <begin position="81"/>
        <end position="101"/>
    </location>
</feature>
<feature type="transmembrane region" description="Helical" evidence="1">
    <location>
        <begin position="122"/>
        <end position="142"/>
    </location>
</feature>
<feature type="transmembrane region" description="Helical" evidence="1">
    <location>
        <begin position="146"/>
        <end position="166"/>
    </location>
</feature>
<feature type="transmembrane region" description="Helical" evidence="1">
    <location>
        <begin position="186"/>
        <end position="206"/>
    </location>
</feature>
<feature type="transmembrane region" description="Helical" evidence="1">
    <location>
        <begin position="227"/>
        <end position="247"/>
    </location>
</feature>
<feature type="transmembrane region" description="Helical" evidence="1">
    <location>
        <begin position="252"/>
        <end position="272"/>
    </location>
</feature>
<feature type="transmembrane region" description="Helical" evidence="1">
    <location>
        <begin position="302"/>
        <end position="322"/>
    </location>
</feature>
<name>MRAY_SHOC1</name>
<proteinExistence type="inferred from homology"/>
<reference key="1">
    <citation type="submission" date="2003-10" db="EMBL/GenBank/DDBJ databases">
        <title>The complete genome sequence of the alkaliphilic Bacillus clausii KSM-K16.</title>
        <authorList>
            <person name="Takaki Y."/>
            <person name="Kageyama Y."/>
            <person name="Shimamura S."/>
            <person name="Suzuki H."/>
            <person name="Nishi S."/>
            <person name="Hatada Y."/>
            <person name="Kawai S."/>
            <person name="Ito S."/>
            <person name="Horikoshi K."/>
        </authorList>
    </citation>
    <scope>NUCLEOTIDE SEQUENCE [LARGE SCALE GENOMIC DNA]</scope>
    <source>
        <strain>KSM-K16</strain>
    </source>
</reference>
<organism>
    <name type="scientific">Shouchella clausii (strain KSM-K16)</name>
    <name type="common">Alkalihalobacillus clausii</name>
    <dbReference type="NCBI Taxonomy" id="66692"/>
    <lineage>
        <taxon>Bacteria</taxon>
        <taxon>Bacillati</taxon>
        <taxon>Bacillota</taxon>
        <taxon>Bacilli</taxon>
        <taxon>Bacillales</taxon>
        <taxon>Bacillaceae</taxon>
        <taxon>Shouchella</taxon>
    </lineage>
</organism>
<accession>Q5WFG7</accession>
<keyword id="KW-0131">Cell cycle</keyword>
<keyword id="KW-0132">Cell division</keyword>
<keyword id="KW-1003">Cell membrane</keyword>
<keyword id="KW-0133">Cell shape</keyword>
<keyword id="KW-0961">Cell wall biogenesis/degradation</keyword>
<keyword id="KW-0460">Magnesium</keyword>
<keyword id="KW-0472">Membrane</keyword>
<keyword id="KW-0479">Metal-binding</keyword>
<keyword id="KW-0573">Peptidoglycan synthesis</keyword>
<keyword id="KW-1185">Reference proteome</keyword>
<keyword id="KW-0808">Transferase</keyword>
<keyword id="KW-0812">Transmembrane</keyword>
<keyword id="KW-1133">Transmembrane helix</keyword>
<protein>
    <recommendedName>
        <fullName evidence="1">Phospho-N-acetylmuramoyl-pentapeptide-transferase</fullName>
        <ecNumber evidence="1">2.7.8.13</ecNumber>
    </recommendedName>
    <alternativeName>
        <fullName evidence="1">UDP-MurNAc-pentapeptide phosphotransferase</fullName>
    </alternativeName>
</protein>
<evidence type="ECO:0000255" key="1">
    <source>
        <dbReference type="HAMAP-Rule" id="MF_00038"/>
    </source>
</evidence>
<dbReference type="EC" id="2.7.8.13" evidence="1"/>
<dbReference type="EMBL" id="AP006627">
    <property type="protein sequence ID" value="BAD64893.1"/>
    <property type="molecule type" value="Genomic_DNA"/>
</dbReference>
<dbReference type="RefSeq" id="WP_011247201.1">
    <property type="nucleotide sequence ID" value="NC_006582.1"/>
</dbReference>
<dbReference type="SMR" id="Q5WFG7"/>
<dbReference type="STRING" id="66692.ABC2358"/>
<dbReference type="KEGG" id="bcl:ABC2358"/>
<dbReference type="eggNOG" id="COG0472">
    <property type="taxonomic scope" value="Bacteria"/>
</dbReference>
<dbReference type="HOGENOM" id="CLU_023982_0_1_9"/>
<dbReference type="OrthoDB" id="9805475at2"/>
<dbReference type="UniPathway" id="UPA00219"/>
<dbReference type="Proteomes" id="UP000001168">
    <property type="component" value="Chromosome"/>
</dbReference>
<dbReference type="GO" id="GO:0005886">
    <property type="term" value="C:plasma membrane"/>
    <property type="evidence" value="ECO:0007669"/>
    <property type="project" value="UniProtKB-SubCell"/>
</dbReference>
<dbReference type="GO" id="GO:0046872">
    <property type="term" value="F:metal ion binding"/>
    <property type="evidence" value="ECO:0007669"/>
    <property type="project" value="UniProtKB-KW"/>
</dbReference>
<dbReference type="GO" id="GO:0008963">
    <property type="term" value="F:phospho-N-acetylmuramoyl-pentapeptide-transferase activity"/>
    <property type="evidence" value="ECO:0007669"/>
    <property type="project" value="UniProtKB-UniRule"/>
</dbReference>
<dbReference type="GO" id="GO:0051992">
    <property type="term" value="F:UDP-N-acetylmuramoyl-L-alanyl-D-glutamyl-meso-2,6-diaminopimelyl-D-alanyl-D-alanine:undecaprenyl-phosphate transferase activity"/>
    <property type="evidence" value="ECO:0007669"/>
    <property type="project" value="RHEA"/>
</dbReference>
<dbReference type="GO" id="GO:0051301">
    <property type="term" value="P:cell division"/>
    <property type="evidence" value="ECO:0007669"/>
    <property type="project" value="UniProtKB-KW"/>
</dbReference>
<dbReference type="GO" id="GO:0071555">
    <property type="term" value="P:cell wall organization"/>
    <property type="evidence" value="ECO:0007669"/>
    <property type="project" value="UniProtKB-KW"/>
</dbReference>
<dbReference type="GO" id="GO:0009252">
    <property type="term" value="P:peptidoglycan biosynthetic process"/>
    <property type="evidence" value="ECO:0007669"/>
    <property type="project" value="UniProtKB-UniRule"/>
</dbReference>
<dbReference type="GO" id="GO:0008360">
    <property type="term" value="P:regulation of cell shape"/>
    <property type="evidence" value="ECO:0007669"/>
    <property type="project" value="UniProtKB-KW"/>
</dbReference>
<dbReference type="CDD" id="cd06852">
    <property type="entry name" value="GT_MraY"/>
    <property type="match status" value="1"/>
</dbReference>
<dbReference type="HAMAP" id="MF_00038">
    <property type="entry name" value="MraY"/>
    <property type="match status" value="1"/>
</dbReference>
<dbReference type="InterPro" id="IPR000715">
    <property type="entry name" value="Glycosyl_transferase_4"/>
</dbReference>
<dbReference type="InterPro" id="IPR003524">
    <property type="entry name" value="PNAcMuramoyl-5peptid_Trfase"/>
</dbReference>
<dbReference type="InterPro" id="IPR018480">
    <property type="entry name" value="PNAcMuramoyl-5peptid_Trfase_CS"/>
</dbReference>
<dbReference type="NCBIfam" id="TIGR00445">
    <property type="entry name" value="mraY"/>
    <property type="match status" value="1"/>
</dbReference>
<dbReference type="PANTHER" id="PTHR22926">
    <property type="entry name" value="PHOSPHO-N-ACETYLMURAMOYL-PENTAPEPTIDE-TRANSFERASE"/>
    <property type="match status" value="1"/>
</dbReference>
<dbReference type="PANTHER" id="PTHR22926:SF5">
    <property type="entry name" value="PHOSPHO-N-ACETYLMURAMOYL-PENTAPEPTIDE-TRANSFERASE HOMOLOG"/>
    <property type="match status" value="1"/>
</dbReference>
<dbReference type="Pfam" id="PF00953">
    <property type="entry name" value="Glycos_transf_4"/>
    <property type="match status" value="1"/>
</dbReference>
<dbReference type="Pfam" id="PF10555">
    <property type="entry name" value="MraY_sig1"/>
    <property type="match status" value="1"/>
</dbReference>
<dbReference type="PROSITE" id="PS01347">
    <property type="entry name" value="MRAY_1"/>
    <property type="match status" value="1"/>
</dbReference>
<dbReference type="PROSITE" id="PS01348">
    <property type="entry name" value="MRAY_2"/>
    <property type="match status" value="1"/>
</dbReference>